<sequence length="153" mass="17845">MSPSNVFIDSSVMVGLFIGDEKAHKLLSKLINDGFMLCINPIVFSETMFKVTFHIALEDGIRGVYDLKKNLNRYSWVYEEVREKIDKMIKMNYLKILDTNWEVLKLAPEIGKKYNLLTNDAIIIATCKYYRINKLATFDSDFEKVDFIEIIKE</sequence>
<reference key="1">
    <citation type="journal article" date="1996" name="Science">
        <title>Complete genome sequence of the methanogenic archaeon, Methanococcus jannaschii.</title>
        <authorList>
            <person name="Bult C.J."/>
            <person name="White O."/>
            <person name="Olsen G.J."/>
            <person name="Zhou L."/>
            <person name="Fleischmann R.D."/>
            <person name="Sutton G.G."/>
            <person name="Blake J.A."/>
            <person name="FitzGerald L.M."/>
            <person name="Clayton R.A."/>
            <person name="Gocayne J.D."/>
            <person name="Kerlavage A.R."/>
            <person name="Dougherty B.A."/>
            <person name="Tomb J.-F."/>
            <person name="Adams M.D."/>
            <person name="Reich C.I."/>
            <person name="Overbeek R."/>
            <person name="Kirkness E.F."/>
            <person name="Weinstock K.G."/>
            <person name="Merrick J.M."/>
            <person name="Glodek A."/>
            <person name="Scott J.L."/>
            <person name="Geoghagen N.S.M."/>
            <person name="Weidman J.F."/>
            <person name="Fuhrmann J.L."/>
            <person name="Nguyen D."/>
            <person name="Utterback T.R."/>
            <person name="Kelley J.M."/>
            <person name="Peterson J.D."/>
            <person name="Sadow P.W."/>
            <person name="Hanna M.C."/>
            <person name="Cotton M.D."/>
            <person name="Roberts K.M."/>
            <person name="Hurst M.A."/>
            <person name="Kaine B.P."/>
            <person name="Borodovsky M."/>
            <person name="Klenk H.-P."/>
            <person name="Fraser C.M."/>
            <person name="Smith H.O."/>
            <person name="Woese C.R."/>
            <person name="Venter J.C."/>
        </authorList>
    </citation>
    <scope>NUCLEOTIDE SEQUENCE [LARGE SCALE GENOMIC DNA]</scope>
    <source>
        <strain>ATCC 43067 / DSM 2661 / JAL-1 / JCM 10045 / NBRC 100440</strain>
    </source>
</reference>
<dbReference type="EC" id="3.1.-.-" evidence="1"/>
<dbReference type="EMBL" id="L77118">
    <property type="protein sequence ID" value="AAC37100.1"/>
    <property type="molecule type" value="Genomic_DNA"/>
</dbReference>
<dbReference type="PIR" id="E64513">
    <property type="entry name" value="E64513"/>
</dbReference>
<dbReference type="RefSeq" id="WP_010890077.1">
    <property type="nucleotide sequence ID" value="NC_001732.1"/>
</dbReference>
<dbReference type="SMR" id="Q60288"/>
<dbReference type="PaxDb" id="243232-MJ_ECL30"/>
<dbReference type="EnsemblBacteria" id="AAC37100">
    <property type="protein sequence ID" value="AAC37100"/>
    <property type="gene ID" value="MJ_ECL30"/>
</dbReference>
<dbReference type="GeneID" id="1450813"/>
<dbReference type="KEGG" id="mja:MJ_ECL30"/>
<dbReference type="eggNOG" id="arCOG00710">
    <property type="taxonomic scope" value="Archaea"/>
</dbReference>
<dbReference type="HOGENOM" id="CLU_134210_1_1_2"/>
<dbReference type="InParanoid" id="Q60288"/>
<dbReference type="OrthoDB" id="51439at2157"/>
<dbReference type="PhylomeDB" id="Q60288"/>
<dbReference type="Proteomes" id="UP000000805">
    <property type="component" value="Plasmid pDSM2661_1"/>
</dbReference>
<dbReference type="GO" id="GO:0000287">
    <property type="term" value="F:magnesium ion binding"/>
    <property type="evidence" value="ECO:0007669"/>
    <property type="project" value="UniProtKB-UniRule"/>
</dbReference>
<dbReference type="GO" id="GO:0004540">
    <property type="term" value="F:RNA nuclease activity"/>
    <property type="evidence" value="ECO:0007669"/>
    <property type="project" value="InterPro"/>
</dbReference>
<dbReference type="CDD" id="cd18677">
    <property type="entry name" value="PIN_MjVapC2-VapC6_like"/>
    <property type="match status" value="1"/>
</dbReference>
<dbReference type="Gene3D" id="3.40.50.1010">
    <property type="entry name" value="5'-nuclease"/>
    <property type="match status" value="1"/>
</dbReference>
<dbReference type="HAMAP" id="MF_00265">
    <property type="entry name" value="VapC_Nob1"/>
    <property type="match status" value="1"/>
</dbReference>
<dbReference type="InterPro" id="IPR029060">
    <property type="entry name" value="PIN-like_dom_sf"/>
</dbReference>
<dbReference type="InterPro" id="IPR002716">
    <property type="entry name" value="PIN_dom"/>
</dbReference>
<dbReference type="InterPro" id="IPR022907">
    <property type="entry name" value="VapC_family"/>
</dbReference>
<dbReference type="PANTHER" id="PTHR39677">
    <property type="entry name" value="RIBONUCLEASE VAPC6"/>
    <property type="match status" value="1"/>
</dbReference>
<dbReference type="PANTHER" id="PTHR39677:SF4">
    <property type="entry name" value="RIBONUCLEASE VAPC6"/>
    <property type="match status" value="1"/>
</dbReference>
<dbReference type="Pfam" id="PF01850">
    <property type="entry name" value="PIN"/>
    <property type="match status" value="1"/>
</dbReference>
<dbReference type="SMART" id="SM00670">
    <property type="entry name" value="PINc"/>
    <property type="match status" value="1"/>
</dbReference>
<dbReference type="SUPFAM" id="SSF88723">
    <property type="entry name" value="PIN domain-like"/>
    <property type="match status" value="1"/>
</dbReference>
<proteinExistence type="inferred from homology"/>
<protein>
    <recommendedName>
        <fullName evidence="1">Ribonuclease VapC6</fullName>
        <shortName evidence="1">RNase VapC6</shortName>
        <ecNumber evidence="1">3.1.-.-</ecNumber>
    </recommendedName>
    <alternativeName>
        <fullName evidence="1">Putative toxin VapC6</fullName>
    </alternativeName>
</protein>
<feature type="chain" id="PRO_0000107515" description="Ribonuclease VapC6">
    <location>
        <begin position="1"/>
        <end position="153"/>
    </location>
</feature>
<feature type="domain" description="PINc" evidence="1">
    <location>
        <begin position="6"/>
        <end position="152"/>
    </location>
</feature>
<feature type="binding site" evidence="1">
    <location>
        <position position="9"/>
    </location>
    <ligand>
        <name>Mg(2+)</name>
        <dbReference type="ChEBI" id="CHEBI:18420"/>
    </ligand>
</feature>
<feature type="binding site" evidence="1">
    <location>
        <position position="120"/>
    </location>
    <ligand>
        <name>Mg(2+)</name>
        <dbReference type="ChEBI" id="CHEBI:18420"/>
    </ligand>
</feature>
<accession>Q60288</accession>
<geneLocation type="plasmid">
    <name>large ECE</name>
</geneLocation>
<name>VAPC6_METJA</name>
<keyword id="KW-0378">Hydrolase</keyword>
<keyword id="KW-0460">Magnesium</keyword>
<keyword id="KW-0479">Metal-binding</keyword>
<keyword id="KW-0540">Nuclease</keyword>
<keyword id="KW-0614">Plasmid</keyword>
<keyword id="KW-1185">Reference proteome</keyword>
<keyword id="KW-1277">Toxin-antitoxin system</keyword>
<gene>
    <name evidence="1" type="primary">vapC6</name>
    <name type="ordered locus">MJECL30</name>
</gene>
<evidence type="ECO:0000255" key="1">
    <source>
        <dbReference type="HAMAP-Rule" id="MF_00265"/>
    </source>
</evidence>
<organism>
    <name type="scientific">Methanocaldococcus jannaschii (strain ATCC 43067 / DSM 2661 / JAL-1 / JCM 10045 / NBRC 100440)</name>
    <name type="common">Methanococcus jannaschii</name>
    <dbReference type="NCBI Taxonomy" id="243232"/>
    <lineage>
        <taxon>Archaea</taxon>
        <taxon>Methanobacteriati</taxon>
        <taxon>Methanobacteriota</taxon>
        <taxon>Methanomada group</taxon>
        <taxon>Methanococci</taxon>
        <taxon>Methanococcales</taxon>
        <taxon>Methanocaldococcaceae</taxon>
        <taxon>Methanocaldococcus</taxon>
    </lineage>
</organism>
<comment type="function">
    <text evidence="1">Toxic component of a type II toxin-antitoxin (TA) system. An RNase.</text>
</comment>
<comment type="cofactor">
    <cofactor evidence="1">
        <name>Mg(2+)</name>
        <dbReference type="ChEBI" id="CHEBI:18420"/>
    </cofactor>
</comment>
<comment type="similarity">
    <text evidence="1">Belongs to the PINc/VapC protein family.</text>
</comment>